<feature type="chain" id="PRO_0000153003" description="GTP 3',8-cyclase">
    <location>
        <begin position="1"/>
        <end position="327"/>
    </location>
</feature>
<feature type="domain" description="Radical SAM core" evidence="2">
    <location>
        <begin position="7"/>
        <end position="232"/>
    </location>
</feature>
<feature type="binding site" evidence="1">
    <location>
        <position position="16"/>
    </location>
    <ligand>
        <name>GTP</name>
        <dbReference type="ChEBI" id="CHEBI:37565"/>
    </ligand>
</feature>
<feature type="binding site" evidence="1">
    <location>
        <position position="23"/>
    </location>
    <ligand>
        <name>[4Fe-4S] cluster</name>
        <dbReference type="ChEBI" id="CHEBI:49883"/>
        <label>1</label>
        <note>4Fe-4S-S-AdoMet</note>
    </ligand>
</feature>
<feature type="binding site" evidence="1">
    <location>
        <position position="27"/>
    </location>
    <ligand>
        <name>[4Fe-4S] cluster</name>
        <dbReference type="ChEBI" id="CHEBI:49883"/>
        <label>1</label>
        <note>4Fe-4S-S-AdoMet</note>
    </ligand>
</feature>
<feature type="binding site" evidence="1">
    <location>
        <position position="29"/>
    </location>
    <ligand>
        <name>S-adenosyl-L-methionine</name>
        <dbReference type="ChEBI" id="CHEBI:59789"/>
    </ligand>
</feature>
<feature type="binding site" evidence="1">
    <location>
        <position position="30"/>
    </location>
    <ligand>
        <name>[4Fe-4S] cluster</name>
        <dbReference type="ChEBI" id="CHEBI:49883"/>
        <label>1</label>
        <note>4Fe-4S-S-AdoMet</note>
    </ligand>
</feature>
<feature type="binding site" evidence="1">
    <location>
        <position position="66"/>
    </location>
    <ligand>
        <name>GTP</name>
        <dbReference type="ChEBI" id="CHEBI:37565"/>
    </ligand>
</feature>
<feature type="binding site" evidence="1">
    <location>
        <position position="70"/>
    </location>
    <ligand>
        <name>S-adenosyl-L-methionine</name>
        <dbReference type="ChEBI" id="CHEBI:59789"/>
    </ligand>
</feature>
<feature type="binding site" evidence="1">
    <location>
        <position position="97"/>
    </location>
    <ligand>
        <name>GTP</name>
        <dbReference type="ChEBI" id="CHEBI:37565"/>
    </ligand>
</feature>
<feature type="binding site" evidence="1">
    <location>
        <position position="121"/>
    </location>
    <ligand>
        <name>S-adenosyl-L-methionine</name>
        <dbReference type="ChEBI" id="CHEBI:59789"/>
    </ligand>
</feature>
<feature type="binding site" evidence="1">
    <location>
        <position position="158"/>
    </location>
    <ligand>
        <name>GTP</name>
        <dbReference type="ChEBI" id="CHEBI:37565"/>
    </ligand>
</feature>
<feature type="binding site" evidence="1">
    <location>
        <position position="192"/>
    </location>
    <ligand>
        <name>S-adenosyl-L-methionine</name>
        <dbReference type="ChEBI" id="CHEBI:59789"/>
    </ligand>
</feature>
<feature type="binding site" evidence="1">
    <location>
        <position position="255"/>
    </location>
    <ligand>
        <name>[4Fe-4S] cluster</name>
        <dbReference type="ChEBI" id="CHEBI:49883"/>
        <label>2</label>
        <note>4Fe-4S-substrate</note>
    </ligand>
</feature>
<feature type="binding site" evidence="1">
    <location>
        <position position="258"/>
    </location>
    <ligand>
        <name>[4Fe-4S] cluster</name>
        <dbReference type="ChEBI" id="CHEBI:49883"/>
        <label>2</label>
        <note>4Fe-4S-substrate</note>
    </ligand>
</feature>
<feature type="binding site" evidence="1">
    <location>
        <begin position="260"/>
        <end position="262"/>
    </location>
    <ligand>
        <name>GTP</name>
        <dbReference type="ChEBI" id="CHEBI:37565"/>
    </ligand>
</feature>
<feature type="binding site" evidence="1">
    <location>
        <position position="272"/>
    </location>
    <ligand>
        <name>[4Fe-4S] cluster</name>
        <dbReference type="ChEBI" id="CHEBI:49883"/>
        <label>2</label>
        <note>4Fe-4S-substrate</note>
    </ligand>
</feature>
<comment type="function">
    <text evidence="1">Catalyzes the cyclization of GTP to (8S)-3',8-cyclo-7,8-dihydroguanosine 5'-triphosphate.</text>
</comment>
<comment type="catalytic activity">
    <reaction evidence="1">
        <text>GTP + AH2 + S-adenosyl-L-methionine = (8S)-3',8-cyclo-7,8-dihydroguanosine 5'-triphosphate + 5'-deoxyadenosine + L-methionine + A + H(+)</text>
        <dbReference type="Rhea" id="RHEA:49576"/>
        <dbReference type="ChEBI" id="CHEBI:13193"/>
        <dbReference type="ChEBI" id="CHEBI:15378"/>
        <dbReference type="ChEBI" id="CHEBI:17319"/>
        <dbReference type="ChEBI" id="CHEBI:17499"/>
        <dbReference type="ChEBI" id="CHEBI:37565"/>
        <dbReference type="ChEBI" id="CHEBI:57844"/>
        <dbReference type="ChEBI" id="CHEBI:59789"/>
        <dbReference type="ChEBI" id="CHEBI:131766"/>
        <dbReference type="EC" id="4.1.99.22"/>
    </reaction>
</comment>
<comment type="cofactor">
    <cofactor evidence="1">
        <name>[4Fe-4S] cluster</name>
        <dbReference type="ChEBI" id="CHEBI:49883"/>
    </cofactor>
    <text evidence="1">Binds 2 [4Fe-4S] clusters. Binds 1 [4Fe-4S] cluster coordinated with 3 cysteines and an exchangeable S-adenosyl-L-methionine and 1 [4Fe-4S] cluster coordinated with 3 cysteines and the GTP-derived substrate.</text>
</comment>
<comment type="pathway">
    <text evidence="1">Cofactor biosynthesis; molybdopterin biosynthesis.</text>
</comment>
<comment type="subunit">
    <text evidence="1">Monomer and homodimer.</text>
</comment>
<comment type="similarity">
    <text evidence="1">Belongs to the radical SAM superfamily. MoaA family.</text>
</comment>
<organism>
    <name type="scientific">Synechococcus elongatus (strain ATCC 33912 / PCC 7942 / FACHB-805)</name>
    <name type="common">Anacystis nidulans R2</name>
    <dbReference type="NCBI Taxonomy" id="1140"/>
    <lineage>
        <taxon>Bacteria</taxon>
        <taxon>Bacillati</taxon>
        <taxon>Cyanobacteriota</taxon>
        <taxon>Cyanophyceae</taxon>
        <taxon>Synechococcales</taxon>
        <taxon>Synechococcaceae</taxon>
        <taxon>Synechococcus</taxon>
    </lineage>
</organism>
<dbReference type="EC" id="4.1.99.22" evidence="1"/>
<dbReference type="EMBL" id="X99625">
    <property type="protein sequence ID" value="CAA67948.1"/>
    <property type="molecule type" value="Genomic_DNA"/>
</dbReference>
<dbReference type="EMBL" id="CP000100">
    <property type="protein sequence ID" value="ABB57312.1"/>
    <property type="molecule type" value="Genomic_DNA"/>
</dbReference>
<dbReference type="RefSeq" id="WP_011377956.1">
    <property type="nucleotide sequence ID" value="NZ_JACJTX010000003.1"/>
</dbReference>
<dbReference type="SMR" id="Q56211"/>
<dbReference type="STRING" id="1140.Synpcc7942_1282"/>
<dbReference type="PaxDb" id="1140-Synpcc7942_1282"/>
<dbReference type="GeneID" id="72430143"/>
<dbReference type="KEGG" id="syf:Synpcc7942_1282"/>
<dbReference type="eggNOG" id="COG2896">
    <property type="taxonomic scope" value="Bacteria"/>
</dbReference>
<dbReference type="HOGENOM" id="CLU_009273_0_1_3"/>
<dbReference type="OrthoDB" id="9763993at2"/>
<dbReference type="BioCyc" id="SYNEL:SYNPCC7942_1282-MONOMER"/>
<dbReference type="UniPathway" id="UPA00344"/>
<dbReference type="Proteomes" id="UP000889800">
    <property type="component" value="Chromosome"/>
</dbReference>
<dbReference type="GO" id="GO:0051539">
    <property type="term" value="F:4 iron, 4 sulfur cluster binding"/>
    <property type="evidence" value="ECO:0007669"/>
    <property type="project" value="UniProtKB-UniRule"/>
</dbReference>
<dbReference type="GO" id="GO:0061799">
    <property type="term" value="F:cyclic pyranopterin monophosphate synthase activity"/>
    <property type="evidence" value="ECO:0007669"/>
    <property type="project" value="TreeGrafter"/>
</dbReference>
<dbReference type="GO" id="GO:0061798">
    <property type="term" value="F:GTP 3',8'-cyclase activity"/>
    <property type="evidence" value="ECO:0007669"/>
    <property type="project" value="UniProtKB-UniRule"/>
</dbReference>
<dbReference type="GO" id="GO:0005525">
    <property type="term" value="F:GTP binding"/>
    <property type="evidence" value="ECO:0007669"/>
    <property type="project" value="UniProtKB-UniRule"/>
</dbReference>
<dbReference type="GO" id="GO:0046872">
    <property type="term" value="F:metal ion binding"/>
    <property type="evidence" value="ECO:0007669"/>
    <property type="project" value="UniProtKB-KW"/>
</dbReference>
<dbReference type="GO" id="GO:1904047">
    <property type="term" value="F:S-adenosyl-L-methionine binding"/>
    <property type="evidence" value="ECO:0007669"/>
    <property type="project" value="UniProtKB-UniRule"/>
</dbReference>
<dbReference type="GO" id="GO:0006777">
    <property type="term" value="P:Mo-molybdopterin cofactor biosynthetic process"/>
    <property type="evidence" value="ECO:0007669"/>
    <property type="project" value="UniProtKB-UniRule"/>
</dbReference>
<dbReference type="CDD" id="cd01335">
    <property type="entry name" value="Radical_SAM"/>
    <property type="match status" value="1"/>
</dbReference>
<dbReference type="CDD" id="cd21117">
    <property type="entry name" value="Twitch_MoaA"/>
    <property type="match status" value="1"/>
</dbReference>
<dbReference type="Gene3D" id="3.20.20.70">
    <property type="entry name" value="Aldolase class I"/>
    <property type="match status" value="1"/>
</dbReference>
<dbReference type="HAMAP" id="MF_01225_B">
    <property type="entry name" value="MoaA_B"/>
    <property type="match status" value="1"/>
</dbReference>
<dbReference type="InterPro" id="IPR013785">
    <property type="entry name" value="Aldolase_TIM"/>
</dbReference>
<dbReference type="InterPro" id="IPR006638">
    <property type="entry name" value="Elp3/MiaA/NifB-like_rSAM"/>
</dbReference>
<dbReference type="InterPro" id="IPR013483">
    <property type="entry name" value="MoaA"/>
</dbReference>
<dbReference type="InterPro" id="IPR000385">
    <property type="entry name" value="MoaA_NifB_PqqE_Fe-S-bd_CS"/>
</dbReference>
<dbReference type="InterPro" id="IPR010505">
    <property type="entry name" value="MoaA_twitch"/>
</dbReference>
<dbReference type="InterPro" id="IPR050105">
    <property type="entry name" value="MoCo_biosynth_MoaA/MoaC"/>
</dbReference>
<dbReference type="InterPro" id="IPR007197">
    <property type="entry name" value="rSAM"/>
</dbReference>
<dbReference type="NCBIfam" id="TIGR02666">
    <property type="entry name" value="moaA"/>
    <property type="match status" value="1"/>
</dbReference>
<dbReference type="PANTHER" id="PTHR22960:SF28">
    <property type="entry name" value="GTP 3',8-CYCLASE"/>
    <property type="match status" value="1"/>
</dbReference>
<dbReference type="PANTHER" id="PTHR22960">
    <property type="entry name" value="MOLYBDOPTERIN COFACTOR SYNTHESIS PROTEIN A"/>
    <property type="match status" value="1"/>
</dbReference>
<dbReference type="Pfam" id="PF06463">
    <property type="entry name" value="Mob_synth_C"/>
    <property type="match status" value="1"/>
</dbReference>
<dbReference type="Pfam" id="PF04055">
    <property type="entry name" value="Radical_SAM"/>
    <property type="match status" value="1"/>
</dbReference>
<dbReference type="SFLD" id="SFLDG01383">
    <property type="entry name" value="cyclic_pyranopterin_phosphate"/>
    <property type="match status" value="1"/>
</dbReference>
<dbReference type="SFLD" id="SFLDS00029">
    <property type="entry name" value="Radical_SAM"/>
    <property type="match status" value="1"/>
</dbReference>
<dbReference type="SMART" id="SM00729">
    <property type="entry name" value="Elp3"/>
    <property type="match status" value="1"/>
</dbReference>
<dbReference type="SUPFAM" id="SSF102114">
    <property type="entry name" value="Radical SAM enzymes"/>
    <property type="match status" value="1"/>
</dbReference>
<dbReference type="PROSITE" id="PS01305">
    <property type="entry name" value="MOAA_NIFB_PQQE"/>
    <property type="match status" value="1"/>
</dbReference>
<dbReference type="PROSITE" id="PS51918">
    <property type="entry name" value="RADICAL_SAM"/>
    <property type="match status" value="1"/>
</dbReference>
<gene>
    <name evidence="1" type="primary">moaA</name>
    <name type="ordered locus">Synpcc7942_1282</name>
</gene>
<reference key="1">
    <citation type="journal article" date="1998" name="J. Bacteriol.">
        <title>The narA locus of Synechococcus sp. strain PCC 7942 consists of a cluster of molybdopterin biosynthesis genes.</title>
        <authorList>
            <person name="Rubio L.M."/>
            <person name="Flores E."/>
            <person name="Herrero A."/>
        </authorList>
    </citation>
    <scope>NUCLEOTIDE SEQUENCE [GENOMIC DNA]</scope>
</reference>
<reference key="2">
    <citation type="submission" date="2005-08" db="EMBL/GenBank/DDBJ databases">
        <title>Complete sequence of chromosome 1 of Synechococcus elongatus PCC 7942.</title>
        <authorList>
            <consortium name="US DOE Joint Genome Institute"/>
            <person name="Copeland A."/>
            <person name="Lucas S."/>
            <person name="Lapidus A."/>
            <person name="Barry K."/>
            <person name="Detter J.C."/>
            <person name="Glavina T."/>
            <person name="Hammon N."/>
            <person name="Israni S."/>
            <person name="Pitluck S."/>
            <person name="Schmutz J."/>
            <person name="Larimer F."/>
            <person name="Land M."/>
            <person name="Kyrpides N."/>
            <person name="Lykidis A."/>
            <person name="Golden S."/>
            <person name="Richardson P."/>
        </authorList>
    </citation>
    <scope>NUCLEOTIDE SEQUENCE [LARGE SCALE GENOMIC DNA]</scope>
    <source>
        <strain>ATCC 33912 / PCC 7942 / FACHB-805</strain>
    </source>
</reference>
<accession>Q56211</accession>
<accession>Q31NQ7</accession>
<sequence length="327" mass="36766">MIVLADHHDRQFRYLRLSLTDVCNFRCGYCLPKGQQLDPQRPALLTLPEIRHLIEGFVALGIEKVRLTGGEPTLRSDLVDIVRAVAAVPGIRRVALTSNGWNLRDRLADLQAAGLTQLNLSLDSLDAARFQAITGSSRFEAVMAALEQAIALRLPILKVNAVLLKTLNYPQLSDFVEFVRDRPISIRFIELMQTLDNHDYFQQEFLSGSVLTEQWLAQGWQPIKRDRTAGPAQEYCHPNYQGKLGIIAPYSPNFCQNCNRLRVTSRGALRLCLFGTGEFDLRPWLQHPDQRSQLLEQVQQTLSFKTAGHQLAEANSGDTRNLATYGG</sequence>
<evidence type="ECO:0000255" key="1">
    <source>
        <dbReference type="HAMAP-Rule" id="MF_01225"/>
    </source>
</evidence>
<evidence type="ECO:0000255" key="2">
    <source>
        <dbReference type="PROSITE-ProRule" id="PRU01266"/>
    </source>
</evidence>
<keyword id="KW-0004">4Fe-4S</keyword>
<keyword id="KW-0342">GTP-binding</keyword>
<keyword id="KW-0408">Iron</keyword>
<keyword id="KW-0411">Iron-sulfur</keyword>
<keyword id="KW-0456">Lyase</keyword>
<keyword id="KW-0479">Metal-binding</keyword>
<keyword id="KW-0501">Molybdenum cofactor biosynthesis</keyword>
<keyword id="KW-0547">Nucleotide-binding</keyword>
<keyword id="KW-1185">Reference proteome</keyword>
<keyword id="KW-0949">S-adenosyl-L-methionine</keyword>
<protein>
    <recommendedName>
        <fullName evidence="1">GTP 3',8-cyclase</fullName>
        <ecNumber evidence="1">4.1.99.22</ecNumber>
    </recommendedName>
    <alternativeName>
        <fullName evidence="1">Molybdenum cofactor biosynthesis protein A</fullName>
    </alternativeName>
</protein>
<proteinExistence type="inferred from homology"/>
<name>MOAA_SYNE7</name>